<organism>
    <name type="scientific">Vibrio cholerae serotype O1 (strain ATCC 39315 / El Tor Inaba N16961)</name>
    <dbReference type="NCBI Taxonomy" id="243277"/>
    <lineage>
        <taxon>Bacteria</taxon>
        <taxon>Pseudomonadati</taxon>
        <taxon>Pseudomonadota</taxon>
        <taxon>Gammaproteobacteria</taxon>
        <taxon>Vibrionales</taxon>
        <taxon>Vibrionaceae</taxon>
        <taxon>Vibrio</taxon>
    </lineage>
</organism>
<proteinExistence type="inferred from homology"/>
<sequence>MLDKQTMVTAHNALPGRTTAMSIDDTHFVNGSSLTAAPQSGQQQILIGMGCFWGAERLFWQLDGVISTSVGYSGGFTPNPTYEEVCSGKTGHTEVVRVIFDPERLPLTELLRAFWERHDPTQGMRQGNDRGTQYRSAIYTFSEDQREIAEASKAAYQALLTAQHRPSITTEILPAGAYYFAETYHQQYLAKNPNGYCGLGGTGVCFPPHSTL</sequence>
<name>MSRA_VIBCH</name>
<keyword id="KW-0560">Oxidoreductase</keyword>
<keyword id="KW-1185">Reference proteome</keyword>
<gene>
    <name type="primary">msrA</name>
    <name type="ordered locus">VC_2549</name>
</gene>
<comment type="function">
    <text evidence="1">Has an important function as a repair enzyme for proteins that have been inactivated by oxidation. Catalyzes the reversible oxidation-reduction of methionine sulfoxide in proteins to methionine (By similarity).</text>
</comment>
<comment type="catalytic activity">
    <reaction>
        <text>L-methionyl-[protein] + [thioredoxin]-disulfide + H2O = L-methionyl-(S)-S-oxide-[protein] + [thioredoxin]-dithiol</text>
        <dbReference type="Rhea" id="RHEA:14217"/>
        <dbReference type="Rhea" id="RHEA-COMP:10698"/>
        <dbReference type="Rhea" id="RHEA-COMP:10700"/>
        <dbReference type="Rhea" id="RHEA-COMP:12313"/>
        <dbReference type="Rhea" id="RHEA-COMP:12315"/>
        <dbReference type="ChEBI" id="CHEBI:15377"/>
        <dbReference type="ChEBI" id="CHEBI:16044"/>
        <dbReference type="ChEBI" id="CHEBI:29950"/>
        <dbReference type="ChEBI" id="CHEBI:44120"/>
        <dbReference type="ChEBI" id="CHEBI:50058"/>
        <dbReference type="EC" id="1.8.4.11"/>
    </reaction>
</comment>
<comment type="catalytic activity">
    <reaction>
        <text>[thioredoxin]-disulfide + L-methionine + H2O = L-methionine (S)-S-oxide + [thioredoxin]-dithiol</text>
        <dbReference type="Rhea" id="RHEA:19993"/>
        <dbReference type="Rhea" id="RHEA-COMP:10698"/>
        <dbReference type="Rhea" id="RHEA-COMP:10700"/>
        <dbReference type="ChEBI" id="CHEBI:15377"/>
        <dbReference type="ChEBI" id="CHEBI:29950"/>
        <dbReference type="ChEBI" id="CHEBI:50058"/>
        <dbReference type="ChEBI" id="CHEBI:57844"/>
        <dbReference type="ChEBI" id="CHEBI:58772"/>
        <dbReference type="EC" id="1.8.4.11"/>
    </reaction>
</comment>
<comment type="similarity">
    <text evidence="2">Belongs to the MsrA Met sulfoxide reductase family.</text>
</comment>
<dbReference type="EC" id="1.8.4.11"/>
<dbReference type="EMBL" id="AE003852">
    <property type="protein sequence ID" value="AAF95690.1"/>
    <property type="molecule type" value="Genomic_DNA"/>
</dbReference>
<dbReference type="PIR" id="E82061">
    <property type="entry name" value="E82061"/>
</dbReference>
<dbReference type="RefSeq" id="NP_232177.1">
    <property type="nucleotide sequence ID" value="NC_002505.1"/>
</dbReference>
<dbReference type="RefSeq" id="WP_000884809.1">
    <property type="nucleotide sequence ID" value="NZ_LT906614.1"/>
</dbReference>
<dbReference type="SMR" id="Q9KP30"/>
<dbReference type="STRING" id="243277.VC_2549"/>
<dbReference type="DNASU" id="2615566"/>
<dbReference type="EnsemblBacteria" id="AAF95690">
    <property type="protein sequence ID" value="AAF95690"/>
    <property type="gene ID" value="VC_2549"/>
</dbReference>
<dbReference type="GeneID" id="69718846"/>
<dbReference type="KEGG" id="vch:VC_2549"/>
<dbReference type="PATRIC" id="fig|243277.26.peg.2427"/>
<dbReference type="eggNOG" id="COG0225">
    <property type="taxonomic scope" value="Bacteria"/>
</dbReference>
<dbReference type="HOGENOM" id="CLU_031040_10_3_6"/>
<dbReference type="Proteomes" id="UP000000584">
    <property type="component" value="Chromosome 1"/>
</dbReference>
<dbReference type="GO" id="GO:0005737">
    <property type="term" value="C:cytoplasm"/>
    <property type="evidence" value="ECO:0000318"/>
    <property type="project" value="GO_Central"/>
</dbReference>
<dbReference type="GO" id="GO:0036456">
    <property type="term" value="F:L-methionine-(S)-S-oxide reductase activity"/>
    <property type="evidence" value="ECO:0000318"/>
    <property type="project" value="GO_Central"/>
</dbReference>
<dbReference type="GO" id="GO:0008113">
    <property type="term" value="F:peptide-methionine (S)-S-oxide reductase activity"/>
    <property type="evidence" value="ECO:0000318"/>
    <property type="project" value="GO_Central"/>
</dbReference>
<dbReference type="GO" id="GO:0034599">
    <property type="term" value="P:cellular response to oxidative stress"/>
    <property type="evidence" value="ECO:0000318"/>
    <property type="project" value="GO_Central"/>
</dbReference>
<dbReference type="GO" id="GO:0036211">
    <property type="term" value="P:protein modification process"/>
    <property type="evidence" value="ECO:0007669"/>
    <property type="project" value="UniProtKB-UniRule"/>
</dbReference>
<dbReference type="FunFam" id="3.30.1060.10:FF:000001">
    <property type="entry name" value="Peptide methionine sulfoxide reductase MsrA"/>
    <property type="match status" value="1"/>
</dbReference>
<dbReference type="Gene3D" id="3.30.1060.10">
    <property type="entry name" value="Peptide methionine sulphoxide reductase MsrA"/>
    <property type="match status" value="1"/>
</dbReference>
<dbReference type="HAMAP" id="MF_01401">
    <property type="entry name" value="MsrA"/>
    <property type="match status" value="1"/>
</dbReference>
<dbReference type="InterPro" id="IPR002569">
    <property type="entry name" value="Met_Sox_Rdtase_MsrA_dom"/>
</dbReference>
<dbReference type="InterPro" id="IPR036509">
    <property type="entry name" value="Met_Sox_Rdtase_MsrA_sf"/>
</dbReference>
<dbReference type="InterPro" id="IPR050162">
    <property type="entry name" value="MsrA_MetSO_reductase"/>
</dbReference>
<dbReference type="NCBIfam" id="TIGR00401">
    <property type="entry name" value="msrA"/>
    <property type="match status" value="1"/>
</dbReference>
<dbReference type="PANTHER" id="PTHR42799">
    <property type="entry name" value="MITOCHONDRIAL PEPTIDE METHIONINE SULFOXIDE REDUCTASE"/>
    <property type="match status" value="1"/>
</dbReference>
<dbReference type="PANTHER" id="PTHR42799:SF2">
    <property type="entry name" value="MITOCHONDRIAL PEPTIDE METHIONINE SULFOXIDE REDUCTASE"/>
    <property type="match status" value="1"/>
</dbReference>
<dbReference type="Pfam" id="PF01625">
    <property type="entry name" value="PMSR"/>
    <property type="match status" value="1"/>
</dbReference>
<dbReference type="SUPFAM" id="SSF55068">
    <property type="entry name" value="Peptide methionine sulfoxide reductase"/>
    <property type="match status" value="1"/>
</dbReference>
<feature type="chain" id="PRO_0000138607" description="Peptide methionine sulfoxide reductase MsrA">
    <location>
        <begin position="1"/>
        <end position="212"/>
    </location>
</feature>
<feature type="active site" evidence="1">
    <location>
        <position position="51"/>
    </location>
</feature>
<accession>Q9KP30</accession>
<reference key="1">
    <citation type="journal article" date="2000" name="Nature">
        <title>DNA sequence of both chromosomes of the cholera pathogen Vibrio cholerae.</title>
        <authorList>
            <person name="Heidelberg J.F."/>
            <person name="Eisen J.A."/>
            <person name="Nelson W.C."/>
            <person name="Clayton R.A."/>
            <person name="Gwinn M.L."/>
            <person name="Dodson R.J."/>
            <person name="Haft D.H."/>
            <person name="Hickey E.K."/>
            <person name="Peterson J.D."/>
            <person name="Umayam L.A."/>
            <person name="Gill S.R."/>
            <person name="Nelson K.E."/>
            <person name="Read T.D."/>
            <person name="Tettelin H."/>
            <person name="Richardson D.L."/>
            <person name="Ermolaeva M.D."/>
            <person name="Vamathevan J.J."/>
            <person name="Bass S."/>
            <person name="Qin H."/>
            <person name="Dragoi I."/>
            <person name="Sellers P."/>
            <person name="McDonald L.A."/>
            <person name="Utterback T.R."/>
            <person name="Fleischmann R.D."/>
            <person name="Nierman W.C."/>
            <person name="White O."/>
            <person name="Salzberg S.L."/>
            <person name="Smith H.O."/>
            <person name="Colwell R.R."/>
            <person name="Mekalanos J.J."/>
            <person name="Venter J.C."/>
            <person name="Fraser C.M."/>
        </authorList>
    </citation>
    <scope>NUCLEOTIDE SEQUENCE [LARGE SCALE GENOMIC DNA]</scope>
    <source>
        <strain>ATCC 39315 / El Tor Inaba N16961</strain>
    </source>
</reference>
<evidence type="ECO:0000250" key="1"/>
<evidence type="ECO:0000305" key="2"/>
<protein>
    <recommendedName>
        <fullName>Peptide methionine sulfoxide reductase MsrA</fullName>
        <shortName>Protein-methionine-S-oxide reductase</shortName>
        <ecNumber>1.8.4.11</ecNumber>
    </recommendedName>
    <alternativeName>
        <fullName>Peptide-methionine (S)-S-oxide reductase</fullName>
        <shortName>Peptide Met(O) reductase</shortName>
    </alternativeName>
</protein>